<protein>
    <recommendedName>
        <fullName evidence="1">Large ribosomal subunit protein bL9</fullName>
    </recommendedName>
    <alternativeName>
        <fullName evidence="2">50S ribosomal protein L9</fullName>
    </alternativeName>
</protein>
<proteinExistence type="inferred from homology"/>
<dbReference type="EMBL" id="CP001601">
    <property type="protein sequence ID" value="ACP34029.1"/>
    <property type="molecule type" value="Genomic_DNA"/>
</dbReference>
<dbReference type="RefSeq" id="WP_010187895.1">
    <property type="nucleotide sequence ID" value="NZ_ACLH01000025.1"/>
</dbReference>
<dbReference type="SMR" id="C3PKC8"/>
<dbReference type="STRING" id="548476.cauri_2438"/>
<dbReference type="GeneID" id="31925088"/>
<dbReference type="KEGG" id="car:cauri_2438"/>
<dbReference type="eggNOG" id="COG0359">
    <property type="taxonomic scope" value="Bacteria"/>
</dbReference>
<dbReference type="HOGENOM" id="CLU_078938_5_1_11"/>
<dbReference type="OrthoDB" id="9788336at2"/>
<dbReference type="Proteomes" id="UP000002077">
    <property type="component" value="Chromosome"/>
</dbReference>
<dbReference type="GO" id="GO:1990904">
    <property type="term" value="C:ribonucleoprotein complex"/>
    <property type="evidence" value="ECO:0007669"/>
    <property type="project" value="UniProtKB-KW"/>
</dbReference>
<dbReference type="GO" id="GO:0005840">
    <property type="term" value="C:ribosome"/>
    <property type="evidence" value="ECO:0007669"/>
    <property type="project" value="UniProtKB-KW"/>
</dbReference>
<dbReference type="GO" id="GO:0019843">
    <property type="term" value="F:rRNA binding"/>
    <property type="evidence" value="ECO:0007669"/>
    <property type="project" value="UniProtKB-UniRule"/>
</dbReference>
<dbReference type="GO" id="GO:0003735">
    <property type="term" value="F:structural constituent of ribosome"/>
    <property type="evidence" value="ECO:0007669"/>
    <property type="project" value="InterPro"/>
</dbReference>
<dbReference type="GO" id="GO:0006412">
    <property type="term" value="P:translation"/>
    <property type="evidence" value="ECO:0007669"/>
    <property type="project" value="UniProtKB-UniRule"/>
</dbReference>
<dbReference type="FunFam" id="3.40.5.10:FF:000003">
    <property type="entry name" value="50S ribosomal protein L9"/>
    <property type="match status" value="1"/>
</dbReference>
<dbReference type="Gene3D" id="3.10.430.100">
    <property type="entry name" value="Ribosomal protein L9, C-terminal domain"/>
    <property type="match status" value="1"/>
</dbReference>
<dbReference type="Gene3D" id="3.40.5.10">
    <property type="entry name" value="Ribosomal protein L9, N-terminal domain"/>
    <property type="match status" value="1"/>
</dbReference>
<dbReference type="HAMAP" id="MF_00503">
    <property type="entry name" value="Ribosomal_bL9"/>
    <property type="match status" value="1"/>
</dbReference>
<dbReference type="InterPro" id="IPR000244">
    <property type="entry name" value="Ribosomal_bL9"/>
</dbReference>
<dbReference type="InterPro" id="IPR009027">
    <property type="entry name" value="Ribosomal_bL9/RNase_H1_N"/>
</dbReference>
<dbReference type="InterPro" id="IPR020594">
    <property type="entry name" value="Ribosomal_bL9_bac/chp"/>
</dbReference>
<dbReference type="InterPro" id="IPR020069">
    <property type="entry name" value="Ribosomal_bL9_C"/>
</dbReference>
<dbReference type="InterPro" id="IPR036791">
    <property type="entry name" value="Ribosomal_bL9_C_sf"/>
</dbReference>
<dbReference type="InterPro" id="IPR020070">
    <property type="entry name" value="Ribosomal_bL9_N"/>
</dbReference>
<dbReference type="InterPro" id="IPR036935">
    <property type="entry name" value="Ribosomal_bL9_N_sf"/>
</dbReference>
<dbReference type="NCBIfam" id="TIGR00158">
    <property type="entry name" value="L9"/>
    <property type="match status" value="1"/>
</dbReference>
<dbReference type="PANTHER" id="PTHR21368">
    <property type="entry name" value="50S RIBOSOMAL PROTEIN L9"/>
    <property type="match status" value="1"/>
</dbReference>
<dbReference type="Pfam" id="PF03948">
    <property type="entry name" value="Ribosomal_L9_C"/>
    <property type="match status" value="1"/>
</dbReference>
<dbReference type="Pfam" id="PF01281">
    <property type="entry name" value="Ribosomal_L9_N"/>
    <property type="match status" value="1"/>
</dbReference>
<dbReference type="SUPFAM" id="SSF55658">
    <property type="entry name" value="L9 N-domain-like"/>
    <property type="match status" value="1"/>
</dbReference>
<dbReference type="SUPFAM" id="SSF55653">
    <property type="entry name" value="Ribosomal protein L9 C-domain"/>
    <property type="match status" value="1"/>
</dbReference>
<dbReference type="PROSITE" id="PS00651">
    <property type="entry name" value="RIBOSOMAL_L9"/>
    <property type="match status" value="1"/>
</dbReference>
<organism>
    <name type="scientific">Corynebacterium aurimucosum (strain ATCC 700975 / DSM 44827 / CIP 107346 / CN-1)</name>
    <name type="common">Corynebacterium nigricans</name>
    <dbReference type="NCBI Taxonomy" id="548476"/>
    <lineage>
        <taxon>Bacteria</taxon>
        <taxon>Bacillati</taxon>
        <taxon>Actinomycetota</taxon>
        <taxon>Actinomycetes</taxon>
        <taxon>Mycobacteriales</taxon>
        <taxon>Corynebacteriaceae</taxon>
        <taxon>Corynebacterium</taxon>
    </lineage>
</organism>
<evidence type="ECO:0000255" key="1">
    <source>
        <dbReference type="HAMAP-Rule" id="MF_00503"/>
    </source>
</evidence>
<evidence type="ECO:0000305" key="2"/>
<name>RL9_CORA7</name>
<comment type="function">
    <text evidence="1">Binds to the 23S rRNA.</text>
</comment>
<comment type="similarity">
    <text evidence="1">Belongs to the bacterial ribosomal protein bL9 family.</text>
</comment>
<feature type="chain" id="PRO_1000196237" description="Large ribosomal subunit protein bL9">
    <location>
        <begin position="1"/>
        <end position="150"/>
    </location>
</feature>
<sequence length="150" mass="16078">MKLILTAAVENLGAPGEIVEVKDGYGRNYLLPRGLAIVATRGAEKQIEGIKRAQEARAIRDLDHAREIRTQLEELKDVNVPVKTSESGKLFGSVSAEDIVNAVAAAGGPKLDKRIVVLPKGLVKKTGNYQVELKLHADVIGKVNFSVVAA</sequence>
<keyword id="KW-1185">Reference proteome</keyword>
<keyword id="KW-0687">Ribonucleoprotein</keyword>
<keyword id="KW-0689">Ribosomal protein</keyword>
<keyword id="KW-0694">RNA-binding</keyword>
<keyword id="KW-0699">rRNA-binding</keyword>
<reference key="1">
    <citation type="journal article" date="2010" name="BMC Genomics">
        <title>Complete genome sequence and lifestyle of black-pigmented Corynebacterium aurimucosum ATCC 700975 (formerly C. nigricans CN-1) isolated from a vaginal swab of a woman with spontaneous abortion.</title>
        <authorList>
            <person name="Trost E."/>
            <person name="Gotker S."/>
            <person name="Schneider J."/>
            <person name="Schneiker-Bekel S."/>
            <person name="Szczepanowski R."/>
            <person name="Tilker A."/>
            <person name="Viehoever P."/>
            <person name="Arnold W."/>
            <person name="Bekel T."/>
            <person name="Blom J."/>
            <person name="Gartemann K.H."/>
            <person name="Linke B."/>
            <person name="Goesmann A."/>
            <person name="Puhler A."/>
            <person name="Shukla S.K."/>
            <person name="Tauch A."/>
        </authorList>
    </citation>
    <scope>NUCLEOTIDE SEQUENCE [LARGE SCALE GENOMIC DNA]</scope>
    <source>
        <strain>ATCC 700975 / DSM 44827 / CIP 107346 / CN-1</strain>
    </source>
</reference>
<accession>C3PKC8</accession>
<gene>
    <name evidence="1" type="primary">rplI</name>
    <name type="ordered locus">cauri_2438</name>
</gene>